<reference key="1">
    <citation type="journal article" date="2008" name="Genome Res.">
        <title>Chlamydia trachomatis: genome sequence analysis of lymphogranuloma venereum isolates.</title>
        <authorList>
            <person name="Thomson N.R."/>
            <person name="Holden M.T.G."/>
            <person name="Carder C."/>
            <person name="Lennard N."/>
            <person name="Lockey S.J."/>
            <person name="Marsh P."/>
            <person name="Skipp P."/>
            <person name="O'Connor C.D."/>
            <person name="Goodhead I."/>
            <person name="Norbertzcak H."/>
            <person name="Harris B."/>
            <person name="Ormond D."/>
            <person name="Rance R."/>
            <person name="Quail M.A."/>
            <person name="Parkhill J."/>
            <person name="Stephens R.S."/>
            <person name="Clarke I.N."/>
        </authorList>
    </citation>
    <scope>NUCLEOTIDE SEQUENCE [LARGE SCALE GENOMIC DNA]</scope>
    <source>
        <strain>UCH-1/proctitis</strain>
    </source>
</reference>
<gene>
    <name evidence="1" type="primary">xerC</name>
    <name type="ordered locus">CTLon_0599</name>
</gene>
<feature type="chain" id="PRO_1000187586" description="Tyrosine recombinase XerC">
    <location>
        <begin position="1"/>
        <end position="315"/>
    </location>
</feature>
<feature type="domain" description="Core-binding (CB)" evidence="3">
    <location>
        <begin position="1"/>
        <end position="103"/>
    </location>
</feature>
<feature type="domain" description="Tyr recombinase" evidence="2">
    <location>
        <begin position="124"/>
        <end position="306"/>
    </location>
</feature>
<feature type="active site" evidence="1">
    <location>
        <position position="164"/>
    </location>
</feature>
<feature type="active site" evidence="1">
    <location>
        <position position="188"/>
    </location>
</feature>
<feature type="active site" evidence="1">
    <location>
        <position position="258"/>
    </location>
</feature>
<feature type="active site" evidence="1">
    <location>
        <position position="261"/>
    </location>
</feature>
<feature type="active site" evidence="1">
    <location>
        <position position="284"/>
    </location>
</feature>
<feature type="active site" description="O-(3'-phospho-DNA)-tyrosine intermediate" evidence="1">
    <location>
        <position position="293"/>
    </location>
</feature>
<organism>
    <name type="scientific">Chlamydia trachomatis serovar L2b (strain UCH-1/proctitis)</name>
    <dbReference type="NCBI Taxonomy" id="471473"/>
    <lineage>
        <taxon>Bacteria</taxon>
        <taxon>Pseudomonadati</taxon>
        <taxon>Chlamydiota</taxon>
        <taxon>Chlamydiia</taxon>
        <taxon>Chlamydiales</taxon>
        <taxon>Chlamydiaceae</taxon>
        <taxon>Chlamydia/Chlamydophila group</taxon>
        <taxon>Chlamydia</taxon>
    </lineage>
</organism>
<proteinExistence type="inferred from homology"/>
<protein>
    <recommendedName>
        <fullName evidence="1">Tyrosine recombinase XerC</fullName>
    </recommendedName>
</protein>
<name>XERC_CHLTB</name>
<sequence>MITSFYAFLDYLKNMKASSLHTLRNYCMDLSSLKCFLEKKSDLSPTPPLSLHDNTYDYPPLSFSLFTKDNIRLYLLEQIQTHHSKRTVRRRLSAIKSFARFCVKNQLIPENPAEMIRGPRLPQELPSPLTYEQVLALMAAPELDKVTGFRDRCLLELFYSSGLRISEITALNRADIDFQSHLLHIRGKGKKERIVPMTKVAVQWLQDYLNHPDRASVEQDHQACFLNRFGKRLSTRSIDRKFQQYLLKTGLSGSITPHTIRHTIATHWLERGMDLKTIQLLLGHTSLETTTIYTHVSMKLKKQIHDETHPHNLEE</sequence>
<dbReference type="EMBL" id="AM884177">
    <property type="protein sequence ID" value="CAP06996.1"/>
    <property type="molecule type" value="Genomic_DNA"/>
</dbReference>
<dbReference type="RefSeq" id="WP_009872581.1">
    <property type="nucleotide sequence ID" value="NC_010280.2"/>
</dbReference>
<dbReference type="SMR" id="B0BBY1"/>
<dbReference type="KEGG" id="ctl:CTLon_0599"/>
<dbReference type="HOGENOM" id="CLU_027562_9_0_0"/>
<dbReference type="Proteomes" id="UP001154401">
    <property type="component" value="Chromosome"/>
</dbReference>
<dbReference type="GO" id="GO:0005737">
    <property type="term" value="C:cytoplasm"/>
    <property type="evidence" value="ECO:0007669"/>
    <property type="project" value="UniProtKB-SubCell"/>
</dbReference>
<dbReference type="GO" id="GO:0003677">
    <property type="term" value="F:DNA binding"/>
    <property type="evidence" value="ECO:0007669"/>
    <property type="project" value="UniProtKB-KW"/>
</dbReference>
<dbReference type="GO" id="GO:0009037">
    <property type="term" value="F:tyrosine-based site-specific recombinase activity"/>
    <property type="evidence" value="ECO:0007669"/>
    <property type="project" value="UniProtKB-UniRule"/>
</dbReference>
<dbReference type="GO" id="GO:0051301">
    <property type="term" value="P:cell division"/>
    <property type="evidence" value="ECO:0007669"/>
    <property type="project" value="UniProtKB-KW"/>
</dbReference>
<dbReference type="GO" id="GO:0007059">
    <property type="term" value="P:chromosome segregation"/>
    <property type="evidence" value="ECO:0007669"/>
    <property type="project" value="UniProtKB-UniRule"/>
</dbReference>
<dbReference type="GO" id="GO:0006313">
    <property type="term" value="P:DNA transposition"/>
    <property type="evidence" value="ECO:0007669"/>
    <property type="project" value="UniProtKB-UniRule"/>
</dbReference>
<dbReference type="CDD" id="cd00798">
    <property type="entry name" value="INT_XerDC_C"/>
    <property type="match status" value="1"/>
</dbReference>
<dbReference type="Gene3D" id="1.10.150.130">
    <property type="match status" value="1"/>
</dbReference>
<dbReference type="Gene3D" id="1.10.443.10">
    <property type="entry name" value="Intergrase catalytic core"/>
    <property type="match status" value="1"/>
</dbReference>
<dbReference type="HAMAP" id="MF_01808">
    <property type="entry name" value="Recomb_XerC_XerD"/>
    <property type="match status" value="1"/>
</dbReference>
<dbReference type="InterPro" id="IPR044068">
    <property type="entry name" value="CB"/>
</dbReference>
<dbReference type="InterPro" id="IPR011010">
    <property type="entry name" value="DNA_brk_join_enz"/>
</dbReference>
<dbReference type="InterPro" id="IPR013762">
    <property type="entry name" value="Integrase-like_cat_sf"/>
</dbReference>
<dbReference type="InterPro" id="IPR002104">
    <property type="entry name" value="Integrase_catalytic"/>
</dbReference>
<dbReference type="InterPro" id="IPR010998">
    <property type="entry name" value="Integrase_recombinase_N"/>
</dbReference>
<dbReference type="InterPro" id="IPR004107">
    <property type="entry name" value="Integrase_SAM-like_N"/>
</dbReference>
<dbReference type="InterPro" id="IPR011931">
    <property type="entry name" value="Recomb_XerC"/>
</dbReference>
<dbReference type="InterPro" id="IPR023009">
    <property type="entry name" value="Tyrosine_recombinase_XerC/XerD"/>
</dbReference>
<dbReference type="InterPro" id="IPR050090">
    <property type="entry name" value="Tyrosine_recombinase_XerCD"/>
</dbReference>
<dbReference type="NCBIfam" id="TIGR02224">
    <property type="entry name" value="recomb_XerC"/>
    <property type="match status" value="1"/>
</dbReference>
<dbReference type="PANTHER" id="PTHR30349">
    <property type="entry name" value="PHAGE INTEGRASE-RELATED"/>
    <property type="match status" value="1"/>
</dbReference>
<dbReference type="PANTHER" id="PTHR30349:SF77">
    <property type="entry name" value="TYROSINE RECOMBINASE XERC"/>
    <property type="match status" value="1"/>
</dbReference>
<dbReference type="Pfam" id="PF02899">
    <property type="entry name" value="Phage_int_SAM_1"/>
    <property type="match status" value="1"/>
</dbReference>
<dbReference type="Pfam" id="PF00589">
    <property type="entry name" value="Phage_integrase"/>
    <property type="match status" value="1"/>
</dbReference>
<dbReference type="SUPFAM" id="SSF56349">
    <property type="entry name" value="DNA breaking-rejoining enzymes"/>
    <property type="match status" value="1"/>
</dbReference>
<dbReference type="PROSITE" id="PS51900">
    <property type="entry name" value="CB"/>
    <property type="match status" value="1"/>
</dbReference>
<dbReference type="PROSITE" id="PS51898">
    <property type="entry name" value="TYR_RECOMBINASE"/>
    <property type="match status" value="1"/>
</dbReference>
<accession>B0BBY1</accession>
<keyword id="KW-0131">Cell cycle</keyword>
<keyword id="KW-0132">Cell division</keyword>
<keyword id="KW-0159">Chromosome partition</keyword>
<keyword id="KW-0963">Cytoplasm</keyword>
<keyword id="KW-0229">DNA integration</keyword>
<keyword id="KW-0233">DNA recombination</keyword>
<keyword id="KW-0238">DNA-binding</keyword>
<comment type="function">
    <text evidence="1">Site-specific tyrosine recombinase, which acts by catalyzing the cutting and rejoining of the recombining DNA molecules. The XerC-XerD complex is essential to convert dimers of the bacterial chromosome into monomers to permit their segregation at cell division. It also contributes to the segregational stability of plasmids.</text>
</comment>
<comment type="subunit">
    <text evidence="1">Forms a cyclic heterotetrameric complex composed of two molecules of XerC and two molecules of XerD.</text>
</comment>
<comment type="subcellular location">
    <subcellularLocation>
        <location evidence="1">Cytoplasm</location>
    </subcellularLocation>
</comment>
<comment type="similarity">
    <text evidence="1">Belongs to the 'phage' integrase family. XerC subfamily.</text>
</comment>
<evidence type="ECO:0000255" key="1">
    <source>
        <dbReference type="HAMAP-Rule" id="MF_01808"/>
    </source>
</evidence>
<evidence type="ECO:0000255" key="2">
    <source>
        <dbReference type="PROSITE-ProRule" id="PRU01246"/>
    </source>
</evidence>
<evidence type="ECO:0000255" key="3">
    <source>
        <dbReference type="PROSITE-ProRule" id="PRU01248"/>
    </source>
</evidence>